<protein>
    <recommendedName>
        <fullName evidence="2">Proteinase-activated receptor 1</fullName>
        <shortName>PAR-1</shortName>
    </recommendedName>
    <alternativeName>
        <fullName>Thrombin receptor</fullName>
    </alternativeName>
</protein>
<proteinExistence type="evidence at transcript level"/>
<name>PAR1_BOVIN</name>
<organism>
    <name type="scientific">Bos taurus</name>
    <name type="common">Bovine</name>
    <dbReference type="NCBI Taxonomy" id="9913"/>
    <lineage>
        <taxon>Eukaryota</taxon>
        <taxon>Metazoa</taxon>
        <taxon>Chordata</taxon>
        <taxon>Craniata</taxon>
        <taxon>Vertebrata</taxon>
        <taxon>Euteleostomi</taxon>
        <taxon>Mammalia</taxon>
        <taxon>Eutheria</taxon>
        <taxon>Laurasiatheria</taxon>
        <taxon>Artiodactyla</taxon>
        <taxon>Ruminantia</taxon>
        <taxon>Pecora</taxon>
        <taxon>Bovidae</taxon>
        <taxon>Bovinae</taxon>
        <taxon>Bos</taxon>
    </lineage>
</organism>
<comment type="function">
    <text evidence="2 3 4">High affinity receptor that binds the activated thrombin, leading to calcium release from intracellular stores. The thrombin-activated receptor signaling pathway is mediated through PTX-insensitive G proteins, activation of phospholipase C resulting in the production of 1D-myo-inositol 1,4,5-trisphosphate (InsP3) which binds to InsP3 receptors causing calcium release from the stores (By similarity). In astrocytes, the calcium released into the cytosol allows the Ca(2+)-dependent release of L-glutamate into the synaptic cleft through BEST1, that targets the neuronal postsynaptic GRIN2A/NMDAR receptor resulting in the synaptic plasticity regulation (By similarity). May play a role in platelets activation and in vascular development (By similarity). Mediates up-regulation of pro-inflammatory cytokines, such as MCP-1/CCL2 and IL6, triggered by coagulation factor Xa (F10) in cardiac fibroblasts and umbilical vein endothelial cells (By similarity).</text>
</comment>
<comment type="subcellular location">
    <subcellularLocation>
        <location evidence="3">Cell membrane</location>
        <topology evidence="3">Multi-pass membrane protein</topology>
    </subcellularLocation>
</comment>
<comment type="domain">
    <text evidence="1">The cleaved signal peptide may not be degraded and may function as an intracellular angiogenesis inhibitor peptide known as parstatin.</text>
</comment>
<comment type="PTM">
    <text evidence="2">Proteolytic cleavage by thrombin generates a new N-terminus that functions as a tethered ligand. Also proteolytically cleaved by cathepsin CTSG.</text>
</comment>
<comment type="PTM">
    <text evidence="1">Phosphorylated in the C-terminal tail; probably mediating desensitization prior to the uncoupling and internalization of the receptor.</text>
</comment>
<comment type="similarity">
    <text evidence="6">Belongs to the G-protein coupled receptor 1 family.</text>
</comment>
<accession>A7YY44</accession>
<feature type="signal peptide" evidence="1">
    <location>
        <begin position="1"/>
        <end position="21"/>
    </location>
</feature>
<feature type="propeptide" id="PRO_0000317424" description="Removed for receptor activation" evidence="1">
    <location>
        <begin position="22"/>
        <end position="41"/>
    </location>
</feature>
<feature type="chain" id="PRO_0000317425" description="Proteinase-activated receptor 1">
    <location>
        <begin position="42"/>
        <end position="427"/>
    </location>
</feature>
<feature type="topological domain" description="Extracellular" evidence="5">
    <location>
        <begin position="42"/>
        <end position="104"/>
    </location>
</feature>
<feature type="transmembrane region" description="Helical; Name=1" evidence="5">
    <location>
        <begin position="105"/>
        <end position="130"/>
    </location>
</feature>
<feature type="topological domain" description="Cytoplasmic" evidence="5">
    <location>
        <begin position="131"/>
        <end position="139"/>
    </location>
</feature>
<feature type="transmembrane region" description="Helical; Name=2" evidence="5">
    <location>
        <begin position="140"/>
        <end position="159"/>
    </location>
</feature>
<feature type="topological domain" description="Extracellular" evidence="5">
    <location>
        <begin position="160"/>
        <end position="178"/>
    </location>
</feature>
<feature type="transmembrane region" description="Helical; Name=3" evidence="5">
    <location>
        <begin position="179"/>
        <end position="200"/>
    </location>
</feature>
<feature type="topological domain" description="Cytoplasmic" evidence="5">
    <location>
        <begin position="201"/>
        <end position="220"/>
    </location>
</feature>
<feature type="transmembrane region" description="Helical; Name=4" evidence="5">
    <location>
        <begin position="221"/>
        <end position="241"/>
    </location>
</feature>
<feature type="topological domain" description="Extracellular" evidence="5">
    <location>
        <begin position="242"/>
        <end position="270"/>
    </location>
</feature>
<feature type="transmembrane region" description="Helical; Name=5" evidence="5">
    <location>
        <begin position="271"/>
        <end position="290"/>
    </location>
</feature>
<feature type="topological domain" description="Cytoplasmic" evidence="5">
    <location>
        <begin position="291"/>
        <end position="313"/>
    </location>
</feature>
<feature type="transmembrane region" description="Helical; Name=6" evidence="5">
    <location>
        <begin position="314"/>
        <end position="336"/>
    </location>
</feature>
<feature type="topological domain" description="Extracellular" evidence="5">
    <location>
        <begin position="337"/>
        <end position="351"/>
    </location>
</feature>
<feature type="transmembrane region" description="Helical; Name=7" evidence="5">
    <location>
        <begin position="352"/>
        <end position="376"/>
    </location>
</feature>
<feature type="topological domain" description="Cytoplasmic" evidence="5">
    <location>
        <begin position="377"/>
        <end position="427"/>
    </location>
</feature>
<feature type="region of interest" description="Disordered" evidence="7">
    <location>
        <begin position="23"/>
        <end position="87"/>
    </location>
</feature>
<feature type="compositionally biased region" description="Acidic residues" evidence="7">
    <location>
        <begin position="58"/>
        <end position="68"/>
    </location>
</feature>
<feature type="site" description="Cleavage; by thrombin and CTSG" evidence="2">
    <location>
        <begin position="41"/>
        <end position="42"/>
    </location>
</feature>
<feature type="modified residue" description="Phosphoserine" evidence="2">
    <location>
        <position position="420"/>
    </location>
</feature>
<feature type="glycosylation site" description="N-linked (GlcNAc...) asparagine" evidence="5">
    <location>
        <position position="35"/>
    </location>
</feature>
<feature type="glycosylation site" description="N-linked (GlcNAc...) asparagine" evidence="5">
    <location>
        <position position="77"/>
    </location>
</feature>
<feature type="glycosylation site" description="N-linked (GlcNAc...) asparagine" evidence="5">
    <location>
        <position position="252"/>
    </location>
</feature>
<feature type="glycosylation site" description="N-linked (GlcNAc...) asparagine" evidence="5">
    <location>
        <position position="261"/>
    </location>
</feature>
<feature type="disulfide bond" evidence="6">
    <location>
        <begin position="177"/>
        <end position="256"/>
    </location>
</feature>
<gene>
    <name evidence="2" type="primary">F2R</name>
    <name type="synonym">PAR1</name>
</gene>
<sequence>MGPRWLLLWAAGLGLCSPLVSARTRGPRPGTDPTNGTLGPRSFFLRNSNDGYEQIPLPEDEDSSEGEFTEDRLSSGNRSSPPQKSPPGFISKSASGYLTSAWLTVFIPSVYTGVFLVSLPLNIMAVVVFVLKMKVKKPAVVYMLHLAAADVLFVCVLPFKISYYFSGSDWRFGSAMCRFVTAAFYGNMYASIMLMTAISVDRFLAVVYPIQSLSWRTLGRASFICLAIWAMAIAGVAPLLLQEQATQVPGLNITACHDVLNQTLLEGYYSYYFSAFSAVFFFVPLTLSTVSYVSIIRCLSSSTVANQNKKSRALLLSAAVFCIFILCFGPTNILLLLHYAFLSSDPMTEAAYFAYLLCVCVSSISCCIDPLIYYYASSECQRHLFAILHCKESSDPGSCNSSGQLMPSKMDTCSSNLSSSLYKKLLT</sequence>
<keyword id="KW-0094">Blood coagulation</keyword>
<keyword id="KW-1003">Cell membrane</keyword>
<keyword id="KW-1015">Disulfide bond</keyword>
<keyword id="KW-0297">G-protein coupled receptor</keyword>
<keyword id="KW-0325">Glycoprotein</keyword>
<keyword id="KW-0356">Hemostasis</keyword>
<keyword id="KW-0472">Membrane</keyword>
<keyword id="KW-0597">Phosphoprotein</keyword>
<keyword id="KW-0675">Receptor</keyword>
<keyword id="KW-1185">Reference proteome</keyword>
<keyword id="KW-0732">Signal</keyword>
<keyword id="KW-0807">Transducer</keyword>
<keyword id="KW-0812">Transmembrane</keyword>
<keyword id="KW-1133">Transmembrane helix</keyword>
<dbReference type="EMBL" id="BC151272">
    <property type="protein sequence ID" value="AAI51273.1"/>
    <property type="molecule type" value="mRNA"/>
</dbReference>
<dbReference type="RefSeq" id="NP_001096567.1">
    <property type="nucleotide sequence ID" value="NM_001103097.2"/>
</dbReference>
<dbReference type="SMR" id="A7YY44"/>
<dbReference type="FunCoup" id="A7YY44">
    <property type="interactions" value="488"/>
</dbReference>
<dbReference type="STRING" id="9913.ENSBTAP00000026902"/>
<dbReference type="GlyCosmos" id="A7YY44">
    <property type="glycosylation" value="4 sites, No reported glycans"/>
</dbReference>
<dbReference type="GlyGen" id="A7YY44">
    <property type="glycosylation" value="4 sites"/>
</dbReference>
<dbReference type="PaxDb" id="9913-ENSBTAP00000026902"/>
<dbReference type="GeneID" id="526585"/>
<dbReference type="KEGG" id="bta:526585"/>
<dbReference type="CTD" id="2149"/>
<dbReference type="eggNOG" id="ENOG502QTR0">
    <property type="taxonomic scope" value="Eukaryota"/>
</dbReference>
<dbReference type="InParanoid" id="A7YY44"/>
<dbReference type="OrthoDB" id="8881832at2759"/>
<dbReference type="Proteomes" id="UP000009136">
    <property type="component" value="Unplaced"/>
</dbReference>
<dbReference type="GO" id="GO:0005901">
    <property type="term" value="C:caveola"/>
    <property type="evidence" value="ECO:0000250"/>
    <property type="project" value="UniProtKB"/>
</dbReference>
<dbReference type="GO" id="GO:0031594">
    <property type="term" value="C:neuromuscular junction"/>
    <property type="evidence" value="ECO:0000250"/>
    <property type="project" value="UniProtKB"/>
</dbReference>
<dbReference type="GO" id="GO:0005886">
    <property type="term" value="C:plasma membrane"/>
    <property type="evidence" value="ECO:0000250"/>
    <property type="project" value="UniProtKB"/>
</dbReference>
<dbReference type="GO" id="GO:0031094">
    <property type="term" value="C:platelet dense tubular network"/>
    <property type="evidence" value="ECO:0000250"/>
    <property type="project" value="UniProtKB"/>
</dbReference>
<dbReference type="GO" id="GO:0045211">
    <property type="term" value="C:postsynaptic membrane"/>
    <property type="evidence" value="ECO:0000250"/>
    <property type="project" value="UniProtKB"/>
</dbReference>
<dbReference type="GO" id="GO:0004930">
    <property type="term" value="F:G protein-coupled receptor activity"/>
    <property type="evidence" value="ECO:0000250"/>
    <property type="project" value="UniProtKB"/>
</dbReference>
<dbReference type="GO" id="GO:0001965">
    <property type="term" value="F:G-protein alpha-subunit binding"/>
    <property type="evidence" value="ECO:0000250"/>
    <property type="project" value="UniProtKB"/>
</dbReference>
<dbReference type="GO" id="GO:0031681">
    <property type="term" value="F:G-protein beta-subunit binding"/>
    <property type="evidence" value="ECO:0000250"/>
    <property type="project" value="UniProtKB"/>
</dbReference>
<dbReference type="GO" id="GO:0015057">
    <property type="term" value="F:thrombin-activated receptor activity"/>
    <property type="evidence" value="ECO:0000250"/>
    <property type="project" value="UniProtKB"/>
</dbReference>
<dbReference type="GO" id="GO:0002248">
    <property type="term" value="P:connective tissue replacement involved in inflammatory response wound healing"/>
    <property type="evidence" value="ECO:0000250"/>
    <property type="project" value="UniProtKB"/>
</dbReference>
<dbReference type="GO" id="GO:0007529">
    <property type="term" value="P:establishment of synaptic specificity at neuromuscular junction"/>
    <property type="evidence" value="ECO:0000250"/>
    <property type="project" value="UniProtKB"/>
</dbReference>
<dbReference type="GO" id="GO:0007186">
    <property type="term" value="P:G protein-coupled receptor signaling pathway"/>
    <property type="evidence" value="ECO:0000250"/>
    <property type="project" value="UniProtKB"/>
</dbReference>
<dbReference type="GO" id="GO:0048873">
    <property type="term" value="P:homeostasis of number of cells within a tissue"/>
    <property type="evidence" value="ECO:0000250"/>
    <property type="project" value="UniProtKB"/>
</dbReference>
<dbReference type="GO" id="GO:0006954">
    <property type="term" value="P:inflammatory response"/>
    <property type="evidence" value="ECO:0000250"/>
    <property type="project" value="UniProtKB"/>
</dbReference>
<dbReference type="GO" id="GO:0008285">
    <property type="term" value="P:negative regulation of cell population proliferation"/>
    <property type="evidence" value="ECO:0000250"/>
    <property type="project" value="UniProtKB"/>
</dbReference>
<dbReference type="GO" id="GO:0003105">
    <property type="term" value="P:negative regulation of glomerular filtration"/>
    <property type="evidence" value="ECO:0000250"/>
    <property type="project" value="UniProtKB"/>
</dbReference>
<dbReference type="GO" id="GO:0043524">
    <property type="term" value="P:negative regulation of neuron apoptotic process"/>
    <property type="evidence" value="ECO:0000250"/>
    <property type="project" value="UniProtKB"/>
</dbReference>
<dbReference type="GO" id="GO:1900134">
    <property type="term" value="P:negative regulation of renin secretion into blood stream"/>
    <property type="evidence" value="ECO:0000250"/>
    <property type="project" value="UniProtKB"/>
</dbReference>
<dbReference type="GO" id="GO:0007200">
    <property type="term" value="P:phospholipase C-activating G protein-coupled receptor signaling pathway"/>
    <property type="evidence" value="ECO:0000250"/>
    <property type="project" value="UniProtKB"/>
</dbReference>
<dbReference type="GO" id="GO:0030168">
    <property type="term" value="P:platelet activation"/>
    <property type="evidence" value="ECO:0000250"/>
    <property type="project" value="UniProtKB"/>
</dbReference>
<dbReference type="GO" id="GO:0043065">
    <property type="term" value="P:positive regulation of apoptotic process"/>
    <property type="evidence" value="ECO:0000250"/>
    <property type="project" value="UniProtKB"/>
</dbReference>
<dbReference type="GO" id="GO:0030194">
    <property type="term" value="P:positive regulation of blood coagulation"/>
    <property type="evidence" value="ECO:0000250"/>
    <property type="project" value="UniProtKB"/>
</dbReference>
<dbReference type="GO" id="GO:0051928">
    <property type="term" value="P:positive regulation of calcium ion transport"/>
    <property type="evidence" value="ECO:0000250"/>
    <property type="project" value="UniProtKB"/>
</dbReference>
<dbReference type="GO" id="GO:0043123">
    <property type="term" value="P:positive regulation of canonical NF-kappaB signal transduction"/>
    <property type="evidence" value="ECO:0000250"/>
    <property type="project" value="UniProtKB"/>
</dbReference>
<dbReference type="GO" id="GO:0030335">
    <property type="term" value="P:positive regulation of cell migration"/>
    <property type="evidence" value="ECO:0000250"/>
    <property type="project" value="UniProtKB"/>
</dbReference>
<dbReference type="GO" id="GO:0008284">
    <property type="term" value="P:positive regulation of cell population proliferation"/>
    <property type="evidence" value="ECO:0000250"/>
    <property type="project" value="UniProtKB"/>
</dbReference>
<dbReference type="GO" id="GO:0032967">
    <property type="term" value="P:positive regulation of collagen biosynthetic process"/>
    <property type="evidence" value="ECO:0000250"/>
    <property type="project" value="UniProtKB"/>
</dbReference>
<dbReference type="GO" id="GO:0007204">
    <property type="term" value="P:positive regulation of cytosolic calcium ion concentration"/>
    <property type="evidence" value="ECO:0000250"/>
    <property type="project" value="UniProtKB"/>
</dbReference>
<dbReference type="GO" id="GO:0045893">
    <property type="term" value="P:positive regulation of DNA-templated transcription"/>
    <property type="evidence" value="ECO:0000250"/>
    <property type="project" value="UniProtKB"/>
</dbReference>
<dbReference type="GO" id="GO:0070374">
    <property type="term" value="P:positive regulation of ERK1 and ERK2 cascade"/>
    <property type="evidence" value="ECO:0000250"/>
    <property type="project" value="UniProtKB"/>
</dbReference>
<dbReference type="GO" id="GO:0032755">
    <property type="term" value="P:positive regulation of interleukin-6 production"/>
    <property type="evidence" value="ECO:0000250"/>
    <property type="project" value="UniProtKB"/>
</dbReference>
<dbReference type="GO" id="GO:0032757">
    <property type="term" value="P:positive regulation of interleukin-8 production"/>
    <property type="evidence" value="ECO:0000250"/>
    <property type="project" value="UniProtKB"/>
</dbReference>
<dbReference type="GO" id="GO:0043410">
    <property type="term" value="P:positive regulation of MAPK cascade"/>
    <property type="evidence" value="ECO:0000250"/>
    <property type="project" value="UniProtKB"/>
</dbReference>
<dbReference type="GO" id="GO:0051897">
    <property type="term" value="P:positive regulation of phosphatidylinositol 3-kinase/protein kinase B signal transduction"/>
    <property type="evidence" value="ECO:0000250"/>
    <property type="project" value="UniProtKB"/>
</dbReference>
<dbReference type="GO" id="GO:0046427">
    <property type="term" value="P:positive regulation of receptor signaling pathway via JAK-STAT"/>
    <property type="evidence" value="ECO:0000250"/>
    <property type="project" value="UniProtKB"/>
</dbReference>
<dbReference type="GO" id="GO:0051281">
    <property type="term" value="P:positive regulation of release of sequestered calcium ion into cytosol"/>
    <property type="evidence" value="ECO:0000250"/>
    <property type="project" value="UniProtKB"/>
</dbReference>
<dbReference type="GO" id="GO:0035025">
    <property type="term" value="P:positive regulation of Rho protein signal transduction"/>
    <property type="evidence" value="ECO:0000250"/>
    <property type="project" value="UniProtKB"/>
</dbReference>
<dbReference type="GO" id="GO:0045987">
    <property type="term" value="P:positive regulation of smooth muscle contraction"/>
    <property type="evidence" value="ECO:0000250"/>
    <property type="project" value="UniProtKB"/>
</dbReference>
<dbReference type="GO" id="GO:0045907">
    <property type="term" value="P:positive regulation of vasoconstriction"/>
    <property type="evidence" value="ECO:0000250"/>
    <property type="project" value="UniProtKB"/>
</dbReference>
<dbReference type="GO" id="GO:0032651">
    <property type="term" value="P:regulation of interleukin-1 beta production"/>
    <property type="evidence" value="ECO:0000250"/>
    <property type="project" value="UniProtKB"/>
</dbReference>
<dbReference type="GO" id="GO:0048167">
    <property type="term" value="P:regulation of synaptic plasticity"/>
    <property type="evidence" value="ECO:0000250"/>
    <property type="project" value="UniProtKB"/>
</dbReference>
<dbReference type="GO" id="GO:0051209">
    <property type="term" value="P:release of sequestered calcium ion into cytosol"/>
    <property type="evidence" value="ECO:0000250"/>
    <property type="project" value="UniProtKB"/>
</dbReference>
<dbReference type="GO" id="GO:0032496">
    <property type="term" value="P:response to lipopolysaccharide"/>
    <property type="evidence" value="ECO:0000250"/>
    <property type="project" value="UniProtKB"/>
</dbReference>
<dbReference type="GO" id="GO:0009611">
    <property type="term" value="P:response to wounding"/>
    <property type="evidence" value="ECO:0000250"/>
    <property type="project" value="UniProtKB"/>
</dbReference>
<dbReference type="GO" id="GO:0070493">
    <property type="term" value="P:thrombin-activated receptor signaling pathway"/>
    <property type="evidence" value="ECO:0000250"/>
    <property type="project" value="UniProtKB"/>
</dbReference>
<dbReference type="CDD" id="cd15369">
    <property type="entry name" value="7tmA_PAR1"/>
    <property type="match status" value="1"/>
</dbReference>
<dbReference type="FunFam" id="1.20.1070.10:FF:000040">
    <property type="entry name" value="Coagulation factor 2 (thrombin) receptor"/>
    <property type="match status" value="1"/>
</dbReference>
<dbReference type="Gene3D" id="1.20.1070.10">
    <property type="entry name" value="Rhodopsin 7-helix transmembrane proteins"/>
    <property type="match status" value="1"/>
</dbReference>
<dbReference type="InterPro" id="IPR000276">
    <property type="entry name" value="GPCR_Rhodpsn"/>
</dbReference>
<dbReference type="InterPro" id="IPR017452">
    <property type="entry name" value="GPCR_Rhodpsn_7TM"/>
</dbReference>
<dbReference type="InterPro" id="IPR003912">
    <property type="entry name" value="Protea_act_rcpt"/>
</dbReference>
<dbReference type="InterPro" id="IPR000935">
    <property type="entry name" value="Thrmbn_rcpt"/>
</dbReference>
<dbReference type="PANTHER" id="PTHR24232">
    <property type="entry name" value="G-PROTEIN COUPLED RECEPTOR"/>
    <property type="match status" value="1"/>
</dbReference>
<dbReference type="PANTHER" id="PTHR24232:SF20">
    <property type="entry name" value="PROTEINASE-ACTIVATED RECEPTOR 1"/>
    <property type="match status" value="1"/>
</dbReference>
<dbReference type="Pfam" id="PF00001">
    <property type="entry name" value="7tm_1"/>
    <property type="match status" value="1"/>
</dbReference>
<dbReference type="PRINTS" id="PR00237">
    <property type="entry name" value="GPCRRHODOPSN"/>
</dbReference>
<dbReference type="PRINTS" id="PR01428">
    <property type="entry name" value="PROTEASEAR"/>
</dbReference>
<dbReference type="PRINTS" id="PR00908">
    <property type="entry name" value="THROMBINR"/>
</dbReference>
<dbReference type="SUPFAM" id="SSF81321">
    <property type="entry name" value="Family A G protein-coupled receptor-like"/>
    <property type="match status" value="1"/>
</dbReference>
<dbReference type="PROSITE" id="PS00237">
    <property type="entry name" value="G_PROTEIN_RECEP_F1_1"/>
    <property type="match status" value="1"/>
</dbReference>
<dbReference type="PROSITE" id="PS50262">
    <property type="entry name" value="G_PROTEIN_RECEP_F1_2"/>
    <property type="match status" value="1"/>
</dbReference>
<evidence type="ECO:0000250" key="1"/>
<evidence type="ECO:0000250" key="2">
    <source>
        <dbReference type="UniProtKB" id="P25116"/>
    </source>
</evidence>
<evidence type="ECO:0000250" key="3">
    <source>
        <dbReference type="UniProtKB" id="P26824"/>
    </source>
</evidence>
<evidence type="ECO:0000250" key="4">
    <source>
        <dbReference type="UniProtKB" id="P30558"/>
    </source>
</evidence>
<evidence type="ECO:0000255" key="5"/>
<evidence type="ECO:0000255" key="6">
    <source>
        <dbReference type="PROSITE-ProRule" id="PRU00521"/>
    </source>
</evidence>
<evidence type="ECO:0000256" key="7">
    <source>
        <dbReference type="SAM" id="MobiDB-lite"/>
    </source>
</evidence>
<reference key="1">
    <citation type="submission" date="2007-07" db="EMBL/GenBank/DDBJ databases">
        <authorList>
            <consortium name="NIH - Mammalian Gene Collection (MGC) project"/>
        </authorList>
    </citation>
    <scope>NUCLEOTIDE SEQUENCE [LARGE SCALE MRNA]</scope>
    <source>
        <strain>Hereford</strain>
        <tissue>Heart ventricle</tissue>
    </source>
</reference>